<organism>
    <name type="scientific">Pelophylax ridibundus</name>
    <name type="common">Marsh frog</name>
    <name type="synonym">Rana ridibunda</name>
    <dbReference type="NCBI Taxonomy" id="8406"/>
    <lineage>
        <taxon>Eukaryota</taxon>
        <taxon>Metazoa</taxon>
        <taxon>Chordata</taxon>
        <taxon>Craniata</taxon>
        <taxon>Vertebrata</taxon>
        <taxon>Euteleostomi</taxon>
        <taxon>Amphibia</taxon>
        <taxon>Batrachia</taxon>
        <taxon>Anura</taxon>
        <taxon>Neobatrachia</taxon>
        <taxon>Ranoidea</taxon>
        <taxon>Ranidae</taxon>
        <taxon>Pelophylax</taxon>
    </lineage>
</organism>
<sequence length="601" mass="69900">MSSQRNYCLAGCLSSCILVILMSFSDAASFQYYQVPQQDQEYRMKTLQRLPSPDMLKALEYIENLRKQASRTESLPDYTSYQGAPFLSEQKDTQALSTDTAKSPTSDDESEWMRAMLEALMQAEKEAKVSPQEKNNLYMDKNIPPELIEDYDSNKWSEKRPKAGKFSSRLYDDYSRDNPLKRTNEIVEGQYTPQSLATLQSVFQELGKLKGQANNKRDRMEEDQKLYKDDEDDLYKANNIAYEDVAGGEDWNPIEEKVESQTQEELKESKEEVEKTDDMEDEIKRSGLLGLQDEEPEKDTKEQESENLSNLMNTYLNMWMNRMDKGKQNPDRRSLRFSGKELDPEAIYQLIDISRNLQIPPEDLIDMLRDEDGRKFGGRLESEKEVDVPLDLDEVTETMTDKTNVYKNKQGFVRQPTSPVLPNIPEGLTVEDMVNLMGADKLQNRFKQNNGLQRPYPMLSKIKGHKAIWPKESEKRQIEYESRPEKEEELADYVVKMLAKYPELLGNNQNKKMPIPYSAGDLQELEKQYENALRGYVNMRGYQDLETVSSSNRRLSTRENDDTQNKQYIDEDLLMKVLEYLNQEKAEKARDHSVKRSMENM</sequence>
<reference key="1">
    <citation type="journal article" date="1996" name="FEBS Lett.">
        <title>Molecular cloning of frog secretogranin II reveals the occurrence of several highly conserved potential regulatory peptides.</title>
        <authorList>
            <person name="Anouar Y."/>
            <person name="Jegou S."/>
            <person name="Alexandre D."/>
            <person name="Lihrmann I."/>
            <person name="Conlon J.M."/>
            <person name="Vaudry H."/>
        </authorList>
    </citation>
    <scope>NUCLEOTIDE SEQUENCE [MRNA]</scope>
    <source>
        <tissue>Pituitary</tissue>
    </source>
</reference>
<reference key="2">
    <citation type="journal article" date="1991" name="FEBS Lett.">
        <title>Identification of a peptide arising from the specific post-translation processing of secretogranin II.</title>
        <authorList>
            <person name="Vaudry H."/>
            <person name="Conlon J.M."/>
        </authorList>
    </citation>
    <scope>PROTEIN SEQUENCE OF 183-215</scope>
    <source>
        <tissue>Brain</tissue>
    </source>
</reference>
<protein>
    <recommendedName>
        <fullName>Secretogranin-2</fullName>
    </recommendedName>
    <alternativeName>
        <fullName>Secretogranin II</fullName>
        <shortName>SgII</shortName>
    </alternativeName>
    <component>
        <recommendedName>
            <fullName>Secretoneurin</fullName>
            <shortName>SN</shortName>
        </recommendedName>
        <alternativeName>
            <fullName>Brain peptide</fullName>
        </alternativeName>
    </component>
</protein>
<proteinExistence type="evidence at protein level"/>
<accession>P30945</accession>
<keyword id="KW-0165">Cleavage on pair of basic residues</keyword>
<keyword id="KW-0903">Direct protein sequencing</keyword>
<keyword id="KW-0964">Secreted</keyword>
<keyword id="KW-0732">Signal</keyword>
<keyword id="KW-0765">Sulfation</keyword>
<dbReference type="EMBL" id="U68757">
    <property type="protein sequence ID" value="AAB17470.1"/>
    <property type="molecule type" value="mRNA"/>
</dbReference>
<dbReference type="PIR" id="S74239">
    <property type="entry name" value="S74239"/>
</dbReference>
<dbReference type="SMR" id="P30945"/>
<dbReference type="GO" id="GO:0005615">
    <property type="term" value="C:extracellular space"/>
    <property type="evidence" value="ECO:0007669"/>
    <property type="project" value="TreeGrafter"/>
</dbReference>
<dbReference type="GO" id="GO:0030141">
    <property type="term" value="C:secretory granule"/>
    <property type="evidence" value="ECO:0007669"/>
    <property type="project" value="InterPro"/>
</dbReference>
<dbReference type="GO" id="GO:0042056">
    <property type="term" value="F:chemoattractant activity"/>
    <property type="evidence" value="ECO:0007669"/>
    <property type="project" value="TreeGrafter"/>
</dbReference>
<dbReference type="GO" id="GO:0005125">
    <property type="term" value="F:cytokine activity"/>
    <property type="evidence" value="ECO:0007669"/>
    <property type="project" value="TreeGrafter"/>
</dbReference>
<dbReference type="GO" id="GO:0001525">
    <property type="term" value="P:angiogenesis"/>
    <property type="evidence" value="ECO:0007669"/>
    <property type="project" value="TreeGrafter"/>
</dbReference>
<dbReference type="GO" id="GO:0048245">
    <property type="term" value="P:eosinophil chemotaxis"/>
    <property type="evidence" value="ECO:0007669"/>
    <property type="project" value="TreeGrafter"/>
</dbReference>
<dbReference type="InterPro" id="IPR001990">
    <property type="entry name" value="Granin"/>
</dbReference>
<dbReference type="InterPro" id="IPR038858">
    <property type="entry name" value="ScgII"/>
</dbReference>
<dbReference type="PANTHER" id="PTHR15119">
    <property type="entry name" value="SECRETOGRANIN II"/>
    <property type="match status" value="1"/>
</dbReference>
<dbReference type="PANTHER" id="PTHR15119:SF0">
    <property type="entry name" value="SECRETOGRANIN-2"/>
    <property type="match status" value="1"/>
</dbReference>
<dbReference type="Pfam" id="PF01271">
    <property type="entry name" value="Granin"/>
    <property type="match status" value="1"/>
</dbReference>
<comment type="function">
    <text evidence="2">Neuroendocrine protein of the granin family that regulates the biogenesis of secretory granules.</text>
</comment>
<comment type="subcellular location">
    <subcellularLocation>
        <location evidence="5">Secreted</location>
    </subcellularLocation>
</comment>
<comment type="similarity">
    <text evidence="5">Belongs to the chromogranin/secretogranin protein family.</text>
</comment>
<name>SCG2_PELRI</name>
<feature type="signal peptide" evidence="1">
    <location>
        <begin position="1"/>
        <end position="30"/>
    </location>
</feature>
<feature type="chain" id="PRO_0000005459" description="Secretogranin-2">
    <location>
        <begin position="31"/>
        <end position="601"/>
    </location>
</feature>
<feature type="peptide" id="PRO_0000005460" description="Secretoneurin" evidence="4">
    <location>
        <begin position="183"/>
        <end position="215"/>
    </location>
</feature>
<feature type="region of interest" description="Disordered" evidence="3">
    <location>
        <begin position="89"/>
        <end position="109"/>
    </location>
</feature>
<feature type="region of interest" description="Disordered" evidence="3">
    <location>
        <begin position="258"/>
        <end position="307"/>
    </location>
</feature>
<feature type="compositionally biased region" description="Polar residues" evidence="3">
    <location>
        <begin position="93"/>
        <end position="104"/>
    </location>
</feature>
<feature type="compositionally biased region" description="Basic and acidic residues" evidence="3">
    <location>
        <begin position="258"/>
        <end position="273"/>
    </location>
</feature>
<feature type="modified residue" description="Sulfotyrosine" evidence="2">
    <location>
        <position position="151"/>
    </location>
</feature>
<evidence type="ECO:0000250" key="1"/>
<evidence type="ECO:0000250" key="2">
    <source>
        <dbReference type="UniProtKB" id="P13521"/>
    </source>
</evidence>
<evidence type="ECO:0000256" key="3">
    <source>
        <dbReference type="SAM" id="MobiDB-lite"/>
    </source>
</evidence>
<evidence type="ECO:0000269" key="4">
    <source>
    </source>
</evidence>
<evidence type="ECO:0000305" key="5"/>